<keyword id="KW-0150">Chloroplast</keyword>
<keyword id="KW-0249">Electron transport</keyword>
<keyword id="KW-0472">Membrane</keyword>
<keyword id="KW-0602">Photosynthesis</keyword>
<keyword id="KW-0934">Plastid</keyword>
<keyword id="KW-0793">Thylakoid</keyword>
<keyword id="KW-0812">Transmembrane</keyword>
<keyword id="KW-1133">Transmembrane helix</keyword>
<keyword id="KW-0813">Transport</keyword>
<comment type="function">
    <text evidence="1">Component of the cytochrome b6-f complex, which mediates electron transfer between photosystem II (PSII) and photosystem I (PSI), cyclic electron flow around PSI, and state transitions. PetG is required for either the stability or assembly of the cytochrome b6-f complex.</text>
</comment>
<comment type="subunit">
    <text evidence="1">The 4 large subunits of the cytochrome b6-f complex are cytochrome b6, subunit IV (17 kDa polypeptide, PetD), cytochrome f and the Rieske protein, while the 4 small subunits are PetG, PetL, PetM and PetN. The complex functions as a dimer.</text>
</comment>
<comment type="subcellular location">
    <subcellularLocation>
        <location evidence="1">Plastid</location>
        <location evidence="1">Chloroplast thylakoid membrane</location>
        <topology evidence="1">Single-pass membrane protein</topology>
    </subcellularLocation>
</comment>
<comment type="similarity">
    <text evidence="1">Belongs to the PetG family.</text>
</comment>
<gene>
    <name evidence="1" type="primary">petG</name>
</gene>
<dbReference type="EMBL" id="AP009377">
    <property type="protein sequence ID" value="BAG16655.1"/>
    <property type="molecule type" value="Genomic_DNA"/>
</dbReference>
<dbReference type="RefSeq" id="YP_001806657.1">
    <property type="nucleotide sequence ID" value="NC_010548.1"/>
</dbReference>
<dbReference type="SMR" id="B1VKE4"/>
<dbReference type="GeneID" id="6166545"/>
<dbReference type="KEGG" id="cjf:6166545"/>
<dbReference type="OrthoDB" id="35473at2759"/>
<dbReference type="GO" id="GO:0009535">
    <property type="term" value="C:chloroplast thylakoid membrane"/>
    <property type="evidence" value="ECO:0007669"/>
    <property type="project" value="UniProtKB-SubCell"/>
</dbReference>
<dbReference type="GO" id="GO:0009512">
    <property type="term" value="C:cytochrome b6f complex"/>
    <property type="evidence" value="ECO:0007669"/>
    <property type="project" value="InterPro"/>
</dbReference>
<dbReference type="GO" id="GO:0045158">
    <property type="term" value="F:electron transporter, transferring electrons within cytochrome b6/f complex of photosystem II activity"/>
    <property type="evidence" value="ECO:0007669"/>
    <property type="project" value="UniProtKB-UniRule"/>
</dbReference>
<dbReference type="GO" id="GO:0017004">
    <property type="term" value="P:cytochrome complex assembly"/>
    <property type="evidence" value="ECO:0007669"/>
    <property type="project" value="UniProtKB-UniRule"/>
</dbReference>
<dbReference type="GO" id="GO:0015979">
    <property type="term" value="P:photosynthesis"/>
    <property type="evidence" value="ECO:0007669"/>
    <property type="project" value="UniProtKB-KW"/>
</dbReference>
<dbReference type="HAMAP" id="MF_00432">
    <property type="entry name" value="Cytb6_f_PetG"/>
    <property type="match status" value="1"/>
</dbReference>
<dbReference type="InterPro" id="IPR003683">
    <property type="entry name" value="Cyt_6/f_cplx_su5"/>
</dbReference>
<dbReference type="InterPro" id="IPR036099">
    <property type="entry name" value="Cyt_6/f_cplx_su5_sf"/>
</dbReference>
<dbReference type="NCBIfam" id="NF001907">
    <property type="entry name" value="PRK00665.1"/>
    <property type="match status" value="1"/>
</dbReference>
<dbReference type="Pfam" id="PF02529">
    <property type="entry name" value="PetG"/>
    <property type="match status" value="1"/>
</dbReference>
<dbReference type="PIRSF" id="PIRSF000034">
    <property type="entry name" value="Cyt_b6-f_V"/>
    <property type="match status" value="1"/>
</dbReference>
<dbReference type="SUPFAM" id="SSF103446">
    <property type="entry name" value="PetG subunit of the cytochrome b6f complex"/>
    <property type="match status" value="1"/>
</dbReference>
<sequence length="37" mass="4076">MIEVLLSGIVLGLIPITLAGLFVTAYLQYRRGDQLDI</sequence>
<geneLocation type="chloroplast"/>
<feature type="chain" id="PRO_0000355380" description="Cytochrome b6-f complex subunit 5">
    <location>
        <begin position="1"/>
        <end position="37"/>
    </location>
</feature>
<feature type="transmembrane region" description="Helical" evidence="1">
    <location>
        <begin position="5"/>
        <end position="25"/>
    </location>
</feature>
<accession>B1VKE4</accession>
<organism>
    <name type="scientific">Cryptomeria japonica</name>
    <name type="common">Japanese cedar</name>
    <name type="synonym">Cupressus japonica</name>
    <dbReference type="NCBI Taxonomy" id="3369"/>
    <lineage>
        <taxon>Eukaryota</taxon>
        <taxon>Viridiplantae</taxon>
        <taxon>Streptophyta</taxon>
        <taxon>Embryophyta</taxon>
        <taxon>Tracheophyta</taxon>
        <taxon>Spermatophyta</taxon>
        <taxon>Pinopsida</taxon>
        <taxon>Pinidae</taxon>
        <taxon>Conifers II</taxon>
        <taxon>Cupressales</taxon>
        <taxon>Cupressaceae</taxon>
        <taxon>Cryptomeria</taxon>
    </lineage>
</organism>
<protein>
    <recommendedName>
        <fullName evidence="1">Cytochrome b6-f complex subunit 5</fullName>
    </recommendedName>
    <alternativeName>
        <fullName evidence="1">Cytochrome b6-f complex subunit PetG</fullName>
    </alternativeName>
    <alternativeName>
        <fullName evidence="1">Cytochrome b6-f complex subunit V</fullName>
    </alternativeName>
</protein>
<proteinExistence type="inferred from homology"/>
<name>PETG_CRYJA</name>
<evidence type="ECO:0000255" key="1">
    <source>
        <dbReference type="HAMAP-Rule" id="MF_00432"/>
    </source>
</evidence>
<reference key="1">
    <citation type="journal article" date="2008" name="BMC Plant Biol.">
        <title>Complete nucleotide sequence of the Cryptomeria japonica D. Don. chloroplast genome and comparative chloroplast genomics: diversified genomic structure of coniferous species.</title>
        <authorList>
            <person name="Hirao T."/>
            <person name="Watanabe A."/>
            <person name="Kurita M."/>
            <person name="Kondo T."/>
            <person name="Takata K."/>
        </authorList>
    </citation>
    <scope>NUCLEOTIDE SEQUENCE [LARGE SCALE GENOMIC DNA]</scope>
</reference>